<keyword id="KW-0067">ATP-binding</keyword>
<keyword id="KW-0238">DNA-binding</keyword>
<keyword id="KW-0255">Endonuclease</keyword>
<keyword id="KW-0378">Hydrolase</keyword>
<keyword id="KW-0540">Nuclease</keyword>
<keyword id="KW-0547">Nucleotide-binding</keyword>
<keyword id="KW-1185">Reference proteome</keyword>
<keyword id="KW-0694">RNA-binding</keyword>
<keyword id="KW-0699">rRNA-binding</keyword>
<proteinExistence type="inferred from homology"/>
<protein>
    <recommendedName>
        <fullName evidence="1">Endonuclease MutS2</fullName>
        <ecNumber evidence="1">3.1.-.-</ecNumber>
    </recommendedName>
    <alternativeName>
        <fullName evidence="1">Ribosome-associated protein quality control-upstream factor</fullName>
        <shortName evidence="1">RQC-upstream factor</shortName>
        <shortName evidence="1">RqcU</shortName>
        <ecNumber evidence="1">3.6.4.-</ecNumber>
    </alternativeName>
</protein>
<sequence>MNQKTLEKIEFPDIINKLWQKAESFPGKQLALKVRPLSDSKIIEEKLLEVEEGLSYLRFKTVDLSVLSDFSEIFLKLSKESMLTGQEIYRLGQLLKVSKDTFFEISRGAFPRLKQIVKLLFFDEALVKDIERSFWPEGTVKDEASPELKRIRGQIARLKDKMREAVEKYLKEPELAKYLQEPLISVRGDRFVLPVKASYKSQVPGIIHDRSNTGQTLFIEPYSAVEAGNELKTLELQEKEIIEKILKDFTQRLACNLTEIKRTYELLGEIDLIVAKARLALELDAYKPRISENGVLSFKQARHPLLGKKAVPFDLTLGKEFDLLIITGPNTGGKTVTLKTIGILTIMARAGLFIPASPETEIGLFGEVYVDIGDEQSIVQSLSTFSSHLLNLKFILENAREGDLVLLDELGTGTDPREGAALAKAILEELRGKKVKVVATTHTSELAAYAIETERVENASVEFDPESLKPTYRLHIGKPGRSNALYIAQGLGLKEQIIEKAKSFLKEEELKLDKLIFDVEQEKRQLEKAKEEVANLLISLKEKEAKLNDELENLEKTKEEIIRKYREKYQQKLLEIERKGKLVIEEIKEKIKTYEEKNLAKLLEEARQKTKEFSQNFALPFEPIKPYRPKVGETVELVEVGQKAEVLAVGENYAIVQAGIMKLNVSFDQIRPAQKQEKENEKGQVKKAGLELTKKQNFNLELDIRGMNTLEAEPVVEKYLDNAYLAGVEKVRIIHGKGTGALKKFLWDYLREVPFVKKFNFAPQNQGGDGATEVYLK</sequence>
<reference key="1">
    <citation type="journal article" date="2005" name="PLoS Genet.">
        <title>Life in hot carbon monoxide: the complete genome sequence of Carboxydothermus hydrogenoformans Z-2901.</title>
        <authorList>
            <person name="Wu M."/>
            <person name="Ren Q."/>
            <person name="Durkin A.S."/>
            <person name="Daugherty S.C."/>
            <person name="Brinkac L.M."/>
            <person name="Dodson R.J."/>
            <person name="Madupu R."/>
            <person name="Sullivan S.A."/>
            <person name="Kolonay J.F."/>
            <person name="Nelson W.C."/>
            <person name="Tallon L.J."/>
            <person name="Jones K.M."/>
            <person name="Ulrich L.E."/>
            <person name="Gonzalez J.M."/>
            <person name="Zhulin I.B."/>
            <person name="Robb F.T."/>
            <person name="Eisen J.A."/>
        </authorList>
    </citation>
    <scope>NUCLEOTIDE SEQUENCE [LARGE SCALE GENOMIC DNA]</scope>
    <source>
        <strain>ATCC BAA-161 / DSM 6008 / Z-2901</strain>
    </source>
</reference>
<name>MUTS2_CARHZ</name>
<accession>Q3ABU1</accession>
<feature type="chain" id="PRO_1000093343" description="Endonuclease MutS2">
    <location>
        <begin position="1"/>
        <end position="777"/>
    </location>
</feature>
<feature type="domain" description="Smr" evidence="1">
    <location>
        <begin position="702"/>
        <end position="777"/>
    </location>
</feature>
<feature type="binding site" evidence="1">
    <location>
        <begin position="328"/>
        <end position="335"/>
    </location>
    <ligand>
        <name>ATP</name>
        <dbReference type="ChEBI" id="CHEBI:30616"/>
    </ligand>
</feature>
<dbReference type="EC" id="3.1.-.-" evidence="1"/>
<dbReference type="EC" id="3.6.4.-" evidence="1"/>
<dbReference type="EMBL" id="CP000141">
    <property type="protein sequence ID" value="ABB15085.1"/>
    <property type="molecule type" value="Genomic_DNA"/>
</dbReference>
<dbReference type="RefSeq" id="WP_011344468.1">
    <property type="nucleotide sequence ID" value="NC_007503.1"/>
</dbReference>
<dbReference type="SMR" id="Q3ABU1"/>
<dbReference type="FunCoup" id="Q3ABU1">
    <property type="interactions" value="112"/>
</dbReference>
<dbReference type="STRING" id="246194.CHY_1564"/>
<dbReference type="KEGG" id="chy:CHY_1564"/>
<dbReference type="eggNOG" id="COG1193">
    <property type="taxonomic scope" value="Bacteria"/>
</dbReference>
<dbReference type="HOGENOM" id="CLU_011252_2_1_9"/>
<dbReference type="InParanoid" id="Q3ABU1"/>
<dbReference type="OrthoDB" id="9808166at2"/>
<dbReference type="Proteomes" id="UP000002706">
    <property type="component" value="Chromosome"/>
</dbReference>
<dbReference type="GO" id="GO:0005524">
    <property type="term" value="F:ATP binding"/>
    <property type="evidence" value="ECO:0007669"/>
    <property type="project" value="UniProtKB-UniRule"/>
</dbReference>
<dbReference type="GO" id="GO:0016887">
    <property type="term" value="F:ATP hydrolysis activity"/>
    <property type="evidence" value="ECO:0007669"/>
    <property type="project" value="InterPro"/>
</dbReference>
<dbReference type="GO" id="GO:0140664">
    <property type="term" value="F:ATP-dependent DNA damage sensor activity"/>
    <property type="evidence" value="ECO:0007669"/>
    <property type="project" value="InterPro"/>
</dbReference>
<dbReference type="GO" id="GO:0004519">
    <property type="term" value="F:endonuclease activity"/>
    <property type="evidence" value="ECO:0007669"/>
    <property type="project" value="UniProtKB-UniRule"/>
</dbReference>
<dbReference type="GO" id="GO:0030983">
    <property type="term" value="F:mismatched DNA binding"/>
    <property type="evidence" value="ECO:0007669"/>
    <property type="project" value="InterPro"/>
</dbReference>
<dbReference type="GO" id="GO:0043023">
    <property type="term" value="F:ribosomal large subunit binding"/>
    <property type="evidence" value="ECO:0007669"/>
    <property type="project" value="UniProtKB-UniRule"/>
</dbReference>
<dbReference type="GO" id="GO:0019843">
    <property type="term" value="F:rRNA binding"/>
    <property type="evidence" value="ECO:0007669"/>
    <property type="project" value="UniProtKB-UniRule"/>
</dbReference>
<dbReference type="GO" id="GO:0006298">
    <property type="term" value="P:mismatch repair"/>
    <property type="evidence" value="ECO:0007669"/>
    <property type="project" value="InterPro"/>
</dbReference>
<dbReference type="GO" id="GO:0045910">
    <property type="term" value="P:negative regulation of DNA recombination"/>
    <property type="evidence" value="ECO:0007669"/>
    <property type="project" value="InterPro"/>
</dbReference>
<dbReference type="GO" id="GO:0072344">
    <property type="term" value="P:rescue of stalled ribosome"/>
    <property type="evidence" value="ECO:0007669"/>
    <property type="project" value="UniProtKB-UniRule"/>
</dbReference>
<dbReference type="FunFam" id="3.40.50.300:FF:000830">
    <property type="entry name" value="Endonuclease MutS2"/>
    <property type="match status" value="1"/>
</dbReference>
<dbReference type="Gene3D" id="1.10.1420.10">
    <property type="match status" value="2"/>
</dbReference>
<dbReference type="Gene3D" id="3.30.1370.110">
    <property type="match status" value="1"/>
</dbReference>
<dbReference type="Gene3D" id="3.40.50.300">
    <property type="entry name" value="P-loop containing nucleotide triphosphate hydrolases"/>
    <property type="match status" value="1"/>
</dbReference>
<dbReference type="HAMAP" id="MF_00092">
    <property type="entry name" value="MutS2"/>
    <property type="match status" value="1"/>
</dbReference>
<dbReference type="InterPro" id="IPR000432">
    <property type="entry name" value="DNA_mismatch_repair_MutS_C"/>
</dbReference>
<dbReference type="InterPro" id="IPR007696">
    <property type="entry name" value="DNA_mismatch_repair_MutS_core"/>
</dbReference>
<dbReference type="InterPro" id="IPR036187">
    <property type="entry name" value="DNA_mismatch_repair_MutS_sf"/>
</dbReference>
<dbReference type="InterPro" id="IPR046893">
    <property type="entry name" value="MSSS"/>
</dbReference>
<dbReference type="InterPro" id="IPR045076">
    <property type="entry name" value="MutS"/>
</dbReference>
<dbReference type="InterPro" id="IPR005747">
    <property type="entry name" value="MutS2"/>
</dbReference>
<dbReference type="InterPro" id="IPR027417">
    <property type="entry name" value="P-loop_NTPase"/>
</dbReference>
<dbReference type="InterPro" id="IPR002625">
    <property type="entry name" value="Smr_dom"/>
</dbReference>
<dbReference type="InterPro" id="IPR036063">
    <property type="entry name" value="Smr_dom_sf"/>
</dbReference>
<dbReference type="NCBIfam" id="TIGR01069">
    <property type="entry name" value="mutS2"/>
    <property type="match status" value="1"/>
</dbReference>
<dbReference type="PANTHER" id="PTHR48466:SF2">
    <property type="entry name" value="OS10G0509000 PROTEIN"/>
    <property type="match status" value="1"/>
</dbReference>
<dbReference type="PANTHER" id="PTHR48466">
    <property type="entry name" value="OS10G0509000 PROTEIN-RELATED"/>
    <property type="match status" value="1"/>
</dbReference>
<dbReference type="Pfam" id="PF20297">
    <property type="entry name" value="MSSS"/>
    <property type="match status" value="1"/>
</dbReference>
<dbReference type="Pfam" id="PF00488">
    <property type="entry name" value="MutS_V"/>
    <property type="match status" value="1"/>
</dbReference>
<dbReference type="Pfam" id="PF01713">
    <property type="entry name" value="Smr"/>
    <property type="match status" value="1"/>
</dbReference>
<dbReference type="PIRSF" id="PIRSF005814">
    <property type="entry name" value="MutS_YshD"/>
    <property type="match status" value="1"/>
</dbReference>
<dbReference type="SMART" id="SM00534">
    <property type="entry name" value="MUTSac"/>
    <property type="match status" value="1"/>
</dbReference>
<dbReference type="SMART" id="SM00533">
    <property type="entry name" value="MUTSd"/>
    <property type="match status" value="1"/>
</dbReference>
<dbReference type="SMART" id="SM00463">
    <property type="entry name" value="SMR"/>
    <property type="match status" value="1"/>
</dbReference>
<dbReference type="SUPFAM" id="SSF48334">
    <property type="entry name" value="DNA repair protein MutS, domain III"/>
    <property type="match status" value="1"/>
</dbReference>
<dbReference type="SUPFAM" id="SSF52540">
    <property type="entry name" value="P-loop containing nucleoside triphosphate hydrolases"/>
    <property type="match status" value="1"/>
</dbReference>
<dbReference type="SUPFAM" id="SSF160443">
    <property type="entry name" value="SMR domain-like"/>
    <property type="match status" value="1"/>
</dbReference>
<dbReference type="PROSITE" id="PS50828">
    <property type="entry name" value="SMR"/>
    <property type="match status" value="1"/>
</dbReference>
<comment type="function">
    <text evidence="1">Endonuclease that is involved in the suppression of homologous recombination and thus may have a key role in the control of bacterial genetic diversity.</text>
</comment>
<comment type="function">
    <text evidence="1">Acts as a ribosome collision sensor, splitting the ribosome into its 2 subunits. Detects stalled/collided 70S ribosomes which it binds and splits by an ATP-hydrolysis driven conformational change. Acts upstream of the ribosome quality control system (RQC), a ribosome-associated complex that mediates the extraction of incompletely synthesized nascent chains from stalled ribosomes and their subsequent degradation. Probably generates substrates for RQC.</text>
</comment>
<comment type="subunit">
    <text evidence="1">Homodimer. Binds to stalled ribosomes, contacting rRNA.</text>
</comment>
<comment type="similarity">
    <text evidence="1">Belongs to the DNA mismatch repair MutS family. MutS2 subfamily.</text>
</comment>
<gene>
    <name evidence="1" type="primary">mutS2</name>
    <name evidence="1" type="synonym">rqcU</name>
    <name type="ordered locus">CHY_1564</name>
</gene>
<evidence type="ECO:0000255" key="1">
    <source>
        <dbReference type="HAMAP-Rule" id="MF_00092"/>
    </source>
</evidence>
<organism>
    <name type="scientific">Carboxydothermus hydrogenoformans (strain ATCC BAA-161 / DSM 6008 / Z-2901)</name>
    <dbReference type="NCBI Taxonomy" id="246194"/>
    <lineage>
        <taxon>Bacteria</taxon>
        <taxon>Bacillati</taxon>
        <taxon>Bacillota</taxon>
        <taxon>Clostridia</taxon>
        <taxon>Thermoanaerobacterales</taxon>
        <taxon>Thermoanaerobacteraceae</taxon>
        <taxon>Carboxydothermus</taxon>
    </lineage>
</organism>